<organism>
    <name type="scientific">Arabidopsis thaliana</name>
    <name type="common">Mouse-ear cress</name>
    <dbReference type="NCBI Taxonomy" id="3702"/>
    <lineage>
        <taxon>Eukaryota</taxon>
        <taxon>Viridiplantae</taxon>
        <taxon>Streptophyta</taxon>
        <taxon>Embryophyta</taxon>
        <taxon>Tracheophyta</taxon>
        <taxon>Spermatophyta</taxon>
        <taxon>Magnoliopsida</taxon>
        <taxon>eudicotyledons</taxon>
        <taxon>Gunneridae</taxon>
        <taxon>Pentapetalae</taxon>
        <taxon>rosids</taxon>
        <taxon>malvids</taxon>
        <taxon>Brassicales</taxon>
        <taxon>Brassicaceae</taxon>
        <taxon>Camelineae</taxon>
        <taxon>Arabidopsis</taxon>
    </lineage>
</organism>
<comment type="function">
    <text evidence="3 4">Has no transcriptional activation activity.</text>
</comment>
<comment type="subunit">
    <text evidence="3">Interacts with FRI.</text>
</comment>
<comment type="disruption phenotype">
    <text evidence="3 4">No suppression of FRI activity.</text>
</comment>
<comment type="similarity">
    <text evidence="5">Belongs to the FLX family.</text>
</comment>
<comment type="sequence caution" evidence="5">
    <conflict type="erroneous initiation">
        <sequence resource="EMBL-CDS" id="AAD10662"/>
    </conflict>
    <text>Truncated N-terminus.</text>
</comment>
<evidence type="ECO:0000255" key="1"/>
<evidence type="ECO:0000256" key="2">
    <source>
        <dbReference type="SAM" id="MobiDB-lite"/>
    </source>
</evidence>
<evidence type="ECO:0000269" key="3">
    <source>
    </source>
</evidence>
<evidence type="ECO:0000269" key="4">
    <source>
    </source>
</evidence>
<evidence type="ECO:0000305" key="5"/>
<reference key="1">
    <citation type="journal article" date="2000" name="Nature">
        <title>Sequence and analysis of chromosome 1 of the plant Arabidopsis thaliana.</title>
        <authorList>
            <person name="Theologis A."/>
            <person name="Ecker J.R."/>
            <person name="Palm C.J."/>
            <person name="Federspiel N.A."/>
            <person name="Kaul S."/>
            <person name="White O."/>
            <person name="Alonso J."/>
            <person name="Altafi H."/>
            <person name="Araujo R."/>
            <person name="Bowman C.L."/>
            <person name="Brooks S.Y."/>
            <person name="Buehler E."/>
            <person name="Chan A."/>
            <person name="Chao Q."/>
            <person name="Chen H."/>
            <person name="Cheuk R.F."/>
            <person name="Chin C.W."/>
            <person name="Chung M.K."/>
            <person name="Conn L."/>
            <person name="Conway A.B."/>
            <person name="Conway A.R."/>
            <person name="Creasy T.H."/>
            <person name="Dewar K."/>
            <person name="Dunn P."/>
            <person name="Etgu P."/>
            <person name="Feldblyum T.V."/>
            <person name="Feng J.-D."/>
            <person name="Fong B."/>
            <person name="Fujii C.Y."/>
            <person name="Gill J.E."/>
            <person name="Goldsmith A.D."/>
            <person name="Haas B."/>
            <person name="Hansen N.F."/>
            <person name="Hughes B."/>
            <person name="Huizar L."/>
            <person name="Hunter J.L."/>
            <person name="Jenkins J."/>
            <person name="Johnson-Hopson C."/>
            <person name="Khan S."/>
            <person name="Khaykin E."/>
            <person name="Kim C.J."/>
            <person name="Koo H.L."/>
            <person name="Kremenetskaia I."/>
            <person name="Kurtz D.B."/>
            <person name="Kwan A."/>
            <person name="Lam B."/>
            <person name="Langin-Hooper S."/>
            <person name="Lee A."/>
            <person name="Lee J.M."/>
            <person name="Lenz C.A."/>
            <person name="Li J.H."/>
            <person name="Li Y.-P."/>
            <person name="Lin X."/>
            <person name="Liu S.X."/>
            <person name="Liu Z.A."/>
            <person name="Luros J.S."/>
            <person name="Maiti R."/>
            <person name="Marziali A."/>
            <person name="Militscher J."/>
            <person name="Miranda M."/>
            <person name="Nguyen M."/>
            <person name="Nierman W.C."/>
            <person name="Osborne B.I."/>
            <person name="Pai G."/>
            <person name="Peterson J."/>
            <person name="Pham P.K."/>
            <person name="Rizzo M."/>
            <person name="Rooney T."/>
            <person name="Rowley D."/>
            <person name="Sakano H."/>
            <person name="Salzberg S.L."/>
            <person name="Schwartz J.R."/>
            <person name="Shinn P."/>
            <person name="Southwick A.M."/>
            <person name="Sun H."/>
            <person name="Tallon L.J."/>
            <person name="Tambunga G."/>
            <person name="Toriumi M.J."/>
            <person name="Town C.D."/>
            <person name="Utterback T."/>
            <person name="Van Aken S."/>
            <person name="Vaysberg M."/>
            <person name="Vysotskaia V.S."/>
            <person name="Walker M."/>
            <person name="Wu D."/>
            <person name="Yu G."/>
            <person name="Fraser C.M."/>
            <person name="Venter J.C."/>
            <person name="Davis R.W."/>
        </authorList>
    </citation>
    <scope>NUCLEOTIDE SEQUENCE [LARGE SCALE GENOMIC DNA]</scope>
    <source>
        <strain>cv. Columbia</strain>
    </source>
</reference>
<reference key="2">
    <citation type="journal article" date="2017" name="Plant J.">
        <title>Araport11: a complete reannotation of the Arabidopsis thaliana reference genome.</title>
        <authorList>
            <person name="Cheng C.Y."/>
            <person name="Krishnakumar V."/>
            <person name="Chan A.P."/>
            <person name="Thibaud-Nissen F."/>
            <person name="Schobel S."/>
            <person name="Town C.D."/>
        </authorList>
    </citation>
    <scope>GENOME REANNOTATION</scope>
    <source>
        <strain>cv. Columbia</strain>
    </source>
</reference>
<reference key="3">
    <citation type="journal article" date="2003" name="Science">
        <title>Empirical analysis of transcriptional activity in the Arabidopsis genome.</title>
        <authorList>
            <person name="Yamada K."/>
            <person name="Lim J."/>
            <person name="Dale J.M."/>
            <person name="Chen H."/>
            <person name="Shinn P."/>
            <person name="Palm C.J."/>
            <person name="Southwick A.M."/>
            <person name="Wu H.C."/>
            <person name="Kim C.J."/>
            <person name="Nguyen M."/>
            <person name="Pham P.K."/>
            <person name="Cheuk R.F."/>
            <person name="Karlin-Newmann G."/>
            <person name="Liu S.X."/>
            <person name="Lam B."/>
            <person name="Sakano H."/>
            <person name="Wu T."/>
            <person name="Yu G."/>
            <person name="Miranda M."/>
            <person name="Quach H.L."/>
            <person name="Tripp M."/>
            <person name="Chang C.H."/>
            <person name="Lee J.M."/>
            <person name="Toriumi M.J."/>
            <person name="Chan M.M."/>
            <person name="Tang C.C."/>
            <person name="Onodera C.S."/>
            <person name="Deng J.M."/>
            <person name="Akiyama K."/>
            <person name="Ansari Y."/>
            <person name="Arakawa T."/>
            <person name="Banh J."/>
            <person name="Banno F."/>
            <person name="Bowser L."/>
            <person name="Brooks S.Y."/>
            <person name="Carninci P."/>
            <person name="Chao Q."/>
            <person name="Choy N."/>
            <person name="Enju A."/>
            <person name="Goldsmith A.D."/>
            <person name="Gurjal M."/>
            <person name="Hansen N.F."/>
            <person name="Hayashizaki Y."/>
            <person name="Johnson-Hopson C."/>
            <person name="Hsuan V.W."/>
            <person name="Iida K."/>
            <person name="Karnes M."/>
            <person name="Khan S."/>
            <person name="Koesema E."/>
            <person name="Ishida J."/>
            <person name="Jiang P.X."/>
            <person name="Jones T."/>
            <person name="Kawai J."/>
            <person name="Kamiya A."/>
            <person name="Meyers C."/>
            <person name="Nakajima M."/>
            <person name="Narusaka M."/>
            <person name="Seki M."/>
            <person name="Sakurai T."/>
            <person name="Satou M."/>
            <person name="Tamse R."/>
            <person name="Vaysberg M."/>
            <person name="Wallender E.K."/>
            <person name="Wong C."/>
            <person name="Yamamura Y."/>
            <person name="Yuan S."/>
            <person name="Shinozaki K."/>
            <person name="Davis R.W."/>
            <person name="Theologis A."/>
            <person name="Ecker J.R."/>
        </authorList>
    </citation>
    <scope>NUCLEOTIDE SEQUENCE [LARGE SCALE MRNA]</scope>
    <source>
        <strain>cv. Columbia</strain>
    </source>
</reference>
<reference key="4">
    <citation type="submission" date="2006-07" db="EMBL/GenBank/DDBJ databases">
        <title>Large-scale analysis of RIKEN Arabidopsis full-length (RAFL) cDNAs.</title>
        <authorList>
            <person name="Totoki Y."/>
            <person name="Seki M."/>
            <person name="Ishida J."/>
            <person name="Nakajima M."/>
            <person name="Enju A."/>
            <person name="Kamiya A."/>
            <person name="Narusaka M."/>
            <person name="Shin-i T."/>
            <person name="Nakagawa M."/>
            <person name="Sakamoto N."/>
            <person name="Oishi K."/>
            <person name="Kohara Y."/>
            <person name="Kobayashi M."/>
            <person name="Toyoda A."/>
            <person name="Sakaki Y."/>
            <person name="Sakurai T."/>
            <person name="Iida K."/>
            <person name="Akiyama K."/>
            <person name="Satou M."/>
            <person name="Toyoda T."/>
            <person name="Konagaya A."/>
            <person name="Carninci P."/>
            <person name="Kawai J."/>
            <person name="Hayashizaki Y."/>
            <person name="Shinozaki K."/>
        </authorList>
    </citation>
    <scope>NUCLEOTIDE SEQUENCE [LARGE SCALE MRNA]</scope>
    <source>
        <strain>cv. Columbia</strain>
    </source>
</reference>
<reference key="5">
    <citation type="journal article" date="2011" name="Plant Cell">
        <title>The FRIGIDA complex activates transcription of FLC, a strong flowering repressor in Arabidopsis, by recruiting chromatin modification factors.</title>
        <authorList>
            <person name="Choi K."/>
            <person name="Kim J."/>
            <person name="Hwang H.J."/>
            <person name="Kim S."/>
            <person name="Park C."/>
            <person name="Kim S.Y."/>
            <person name="Lee I."/>
        </authorList>
    </citation>
    <scope>FUNCTION</scope>
    <scope>INTERACTION WITH FRI</scope>
    <scope>DISRUPTION PHENOTYPE</scope>
</reference>
<reference key="6">
    <citation type="journal article" date="2013" name="Nat. Commun.">
        <title>Two FLX family members are non-redundantly required to establish the vernalization requirement in Arabidopsis.</title>
        <authorList>
            <person name="Lee J."/>
            <person name="Amasino R.M."/>
        </authorList>
    </citation>
    <scope>FUNCTION</scope>
    <scope>DISRUPTION PHENOTYPE</scope>
</reference>
<name>FLXL2_ARATH</name>
<proteinExistence type="evidence at protein level"/>
<accession>Q84TD8</accession>
<accession>Q9ZW90</accession>
<sequence length="359" mass="39742">MESKGRIHPSHHHMRRPLPGPGGCIAHPETFGNHGAIPPSAAQGVYPSFNMLPPPEVMEQKFVAQHGELQRLAIENQRLGGTHGSLRQELAAAQHEIQMLHAQIGSMKSEREQRMMGLAEKVAKMETELQKSEAVKLEMQQARAEARSLVVAREELMSKVHQLTQELQKSRSDVQQIPALMSELENLRQEYQQCRATYDYEKKFYNDHLESLQAMEKNYMTMAREVEKLQAQLMNNANSDRRAGGPYGNNINAEIDASGHQSGNGYYEDAFGPQGYIPQPVAGNATGPNSVVGAAQYPYQGVTQPGYFPQRPGYNFPRGPPGSYDPTTRLPTGPYGAPFPPGPSNNTPYAGTHGNPSRR</sequence>
<gene>
    <name type="primary">FLXL2</name>
    <name type="synonym">FLL2</name>
    <name type="ordered locus">At1g67170</name>
    <name type="ORF">F5A8.8</name>
</gene>
<dbReference type="EMBL" id="AC004146">
    <property type="protein sequence ID" value="AAD10662.1"/>
    <property type="status" value="ALT_INIT"/>
    <property type="molecule type" value="Genomic_DNA"/>
</dbReference>
<dbReference type="EMBL" id="CP002684">
    <property type="protein sequence ID" value="AEE34608.1"/>
    <property type="molecule type" value="Genomic_DNA"/>
</dbReference>
<dbReference type="EMBL" id="CP002684">
    <property type="protein sequence ID" value="ANM58321.1"/>
    <property type="molecule type" value="Genomic_DNA"/>
</dbReference>
<dbReference type="EMBL" id="BT005883">
    <property type="protein sequence ID" value="AAO64818.1"/>
    <property type="molecule type" value="mRNA"/>
</dbReference>
<dbReference type="EMBL" id="AK228253">
    <property type="protein sequence ID" value="BAF00201.1"/>
    <property type="molecule type" value="mRNA"/>
</dbReference>
<dbReference type="PIR" id="F96695">
    <property type="entry name" value="F96695"/>
</dbReference>
<dbReference type="RefSeq" id="NP_001320766.1">
    <property type="nucleotide sequence ID" value="NM_001334276.1"/>
</dbReference>
<dbReference type="RefSeq" id="NP_176888.2">
    <property type="nucleotide sequence ID" value="NM_105387.5"/>
</dbReference>
<dbReference type="SMR" id="Q84TD8"/>
<dbReference type="BioGRID" id="28258">
    <property type="interactions" value="10"/>
</dbReference>
<dbReference type="FunCoup" id="Q84TD8">
    <property type="interactions" value="343"/>
</dbReference>
<dbReference type="IntAct" id="Q84TD8">
    <property type="interactions" value="10"/>
</dbReference>
<dbReference type="STRING" id="3702.Q84TD8"/>
<dbReference type="PaxDb" id="3702-AT1G67170.1"/>
<dbReference type="ProteomicsDB" id="230589"/>
<dbReference type="EnsemblPlants" id="AT1G67170.1">
    <property type="protein sequence ID" value="AT1G67170.1"/>
    <property type="gene ID" value="AT1G67170"/>
</dbReference>
<dbReference type="EnsemblPlants" id="AT1G67170.2">
    <property type="protein sequence ID" value="AT1G67170.2"/>
    <property type="gene ID" value="AT1G67170"/>
</dbReference>
<dbReference type="GeneID" id="843037"/>
<dbReference type="Gramene" id="AT1G67170.1">
    <property type="protein sequence ID" value="AT1G67170.1"/>
    <property type="gene ID" value="AT1G67170"/>
</dbReference>
<dbReference type="Gramene" id="AT1G67170.2">
    <property type="protein sequence ID" value="AT1G67170.2"/>
    <property type="gene ID" value="AT1G67170"/>
</dbReference>
<dbReference type="KEGG" id="ath:AT1G67170"/>
<dbReference type="Araport" id="AT1G67170"/>
<dbReference type="TAIR" id="AT1G67170">
    <property type="gene designation" value="FLL2"/>
</dbReference>
<dbReference type="eggNOG" id="ENOG502QQDI">
    <property type="taxonomic scope" value="Eukaryota"/>
</dbReference>
<dbReference type="HOGENOM" id="CLU_051930_3_1_1"/>
<dbReference type="InParanoid" id="Q84TD8"/>
<dbReference type="OMA" id="RNAFEYQ"/>
<dbReference type="PhylomeDB" id="Q84TD8"/>
<dbReference type="CD-CODE" id="6838ABCD">
    <property type="entry name" value="Synthetic Condensate 000303"/>
</dbReference>
<dbReference type="PRO" id="PR:Q84TD8"/>
<dbReference type="Proteomes" id="UP000006548">
    <property type="component" value="Chromosome 1"/>
</dbReference>
<dbReference type="ExpressionAtlas" id="Q84TD8">
    <property type="expression patterns" value="baseline and differential"/>
</dbReference>
<dbReference type="GO" id="GO:0016604">
    <property type="term" value="C:nuclear body"/>
    <property type="evidence" value="ECO:0000314"/>
    <property type="project" value="TAIR"/>
</dbReference>
<dbReference type="GO" id="GO:0030154">
    <property type="term" value="P:cell differentiation"/>
    <property type="evidence" value="ECO:0007669"/>
    <property type="project" value="UniProtKB-KW"/>
</dbReference>
<dbReference type="GO" id="GO:0009908">
    <property type="term" value="P:flower development"/>
    <property type="evidence" value="ECO:0007669"/>
    <property type="project" value="UniProtKB-KW"/>
</dbReference>
<dbReference type="Gene3D" id="1.10.287.1490">
    <property type="match status" value="1"/>
</dbReference>
<dbReference type="InterPro" id="IPR040353">
    <property type="entry name" value="FLX/FLX-like"/>
</dbReference>
<dbReference type="PANTHER" id="PTHR33405">
    <property type="entry name" value="PROTEIN FLX-LIKE 2"/>
    <property type="match status" value="1"/>
</dbReference>
<dbReference type="PANTHER" id="PTHR33405:SF4">
    <property type="entry name" value="PROTEIN FLX-LIKE 2"/>
    <property type="match status" value="1"/>
</dbReference>
<feature type="chain" id="PRO_0000423736" description="Protein FLX-like 2">
    <location>
        <begin position="1"/>
        <end position="359"/>
    </location>
</feature>
<feature type="region of interest" description="Disordered" evidence="2">
    <location>
        <begin position="1"/>
        <end position="27"/>
    </location>
</feature>
<feature type="region of interest" description="Disordered" evidence="2">
    <location>
        <begin position="303"/>
        <end position="359"/>
    </location>
</feature>
<feature type="coiled-coil region" evidence="1">
    <location>
        <begin position="83"/>
        <end position="236"/>
    </location>
</feature>
<feature type="compositionally biased region" description="Basic residues" evidence="2">
    <location>
        <begin position="1"/>
        <end position="16"/>
    </location>
</feature>
<keyword id="KW-0175">Coiled coil</keyword>
<keyword id="KW-0217">Developmental protein</keyword>
<keyword id="KW-0221">Differentiation</keyword>
<keyword id="KW-0287">Flowering</keyword>
<keyword id="KW-1185">Reference proteome</keyword>
<protein>
    <recommendedName>
        <fullName>Protein FLX-like 2</fullName>
        <shortName>AtFLXL2</shortName>
    </recommendedName>
</protein>